<reference key="1">
    <citation type="journal article" date="2008" name="PLoS Genet.">
        <title>Complete genome sequence of the complex carbohydrate-degrading marine bacterium, Saccharophagus degradans strain 2-40 T.</title>
        <authorList>
            <person name="Weiner R.M."/>
            <person name="Taylor L.E. II"/>
            <person name="Henrissat B."/>
            <person name="Hauser L."/>
            <person name="Land M."/>
            <person name="Coutinho P.M."/>
            <person name="Rancurel C."/>
            <person name="Saunders E.H."/>
            <person name="Longmire A.G."/>
            <person name="Zhang H."/>
            <person name="Bayer E.A."/>
            <person name="Gilbert H.J."/>
            <person name="Larimer F."/>
            <person name="Zhulin I.B."/>
            <person name="Ekborg N.A."/>
            <person name="Lamed R."/>
            <person name="Richardson P.M."/>
            <person name="Borovok I."/>
            <person name="Hutcheson S."/>
        </authorList>
    </citation>
    <scope>NUCLEOTIDE SEQUENCE [LARGE SCALE GENOMIC DNA]</scope>
    <source>
        <strain>2-40 / ATCC 43961 / DSM 17024</strain>
    </source>
</reference>
<proteinExistence type="inferred from homology"/>
<dbReference type="EMBL" id="CP000282">
    <property type="protein sequence ID" value="ABD81953.1"/>
    <property type="molecule type" value="Genomic_DNA"/>
</dbReference>
<dbReference type="RefSeq" id="WP_011469170.1">
    <property type="nucleotide sequence ID" value="NC_007912.1"/>
</dbReference>
<dbReference type="SMR" id="Q21H76"/>
<dbReference type="STRING" id="203122.Sde_2693"/>
<dbReference type="GeneID" id="98614351"/>
<dbReference type="KEGG" id="sde:Sde_2693"/>
<dbReference type="eggNOG" id="COG0254">
    <property type="taxonomic scope" value="Bacteria"/>
</dbReference>
<dbReference type="HOGENOM" id="CLU_114306_4_0_6"/>
<dbReference type="OrthoDB" id="9803251at2"/>
<dbReference type="Proteomes" id="UP000001947">
    <property type="component" value="Chromosome"/>
</dbReference>
<dbReference type="GO" id="GO:1990904">
    <property type="term" value="C:ribonucleoprotein complex"/>
    <property type="evidence" value="ECO:0007669"/>
    <property type="project" value="UniProtKB-KW"/>
</dbReference>
<dbReference type="GO" id="GO:0005840">
    <property type="term" value="C:ribosome"/>
    <property type="evidence" value="ECO:0007669"/>
    <property type="project" value="UniProtKB-KW"/>
</dbReference>
<dbReference type="GO" id="GO:0046872">
    <property type="term" value="F:metal ion binding"/>
    <property type="evidence" value="ECO:0007669"/>
    <property type="project" value="UniProtKB-KW"/>
</dbReference>
<dbReference type="GO" id="GO:0019843">
    <property type="term" value="F:rRNA binding"/>
    <property type="evidence" value="ECO:0007669"/>
    <property type="project" value="UniProtKB-KW"/>
</dbReference>
<dbReference type="GO" id="GO:0003735">
    <property type="term" value="F:structural constituent of ribosome"/>
    <property type="evidence" value="ECO:0007669"/>
    <property type="project" value="InterPro"/>
</dbReference>
<dbReference type="GO" id="GO:0006412">
    <property type="term" value="P:translation"/>
    <property type="evidence" value="ECO:0007669"/>
    <property type="project" value="UniProtKB-UniRule"/>
</dbReference>
<dbReference type="Gene3D" id="4.10.830.30">
    <property type="entry name" value="Ribosomal protein L31"/>
    <property type="match status" value="1"/>
</dbReference>
<dbReference type="HAMAP" id="MF_00501">
    <property type="entry name" value="Ribosomal_bL31_1"/>
    <property type="match status" value="1"/>
</dbReference>
<dbReference type="InterPro" id="IPR034704">
    <property type="entry name" value="Ribosomal_bL28/bL31-like_sf"/>
</dbReference>
<dbReference type="InterPro" id="IPR002150">
    <property type="entry name" value="Ribosomal_bL31"/>
</dbReference>
<dbReference type="InterPro" id="IPR027491">
    <property type="entry name" value="Ribosomal_bL31_A"/>
</dbReference>
<dbReference type="InterPro" id="IPR042105">
    <property type="entry name" value="Ribosomal_bL31_sf"/>
</dbReference>
<dbReference type="NCBIfam" id="TIGR00105">
    <property type="entry name" value="L31"/>
    <property type="match status" value="1"/>
</dbReference>
<dbReference type="NCBIfam" id="NF000612">
    <property type="entry name" value="PRK00019.1"/>
    <property type="match status" value="1"/>
</dbReference>
<dbReference type="PANTHER" id="PTHR33280">
    <property type="entry name" value="50S RIBOSOMAL PROTEIN L31, CHLOROPLASTIC"/>
    <property type="match status" value="1"/>
</dbReference>
<dbReference type="PANTHER" id="PTHR33280:SF6">
    <property type="entry name" value="LARGE RIBOSOMAL SUBUNIT PROTEIN BL31A"/>
    <property type="match status" value="1"/>
</dbReference>
<dbReference type="Pfam" id="PF01197">
    <property type="entry name" value="Ribosomal_L31"/>
    <property type="match status" value="1"/>
</dbReference>
<dbReference type="PRINTS" id="PR01249">
    <property type="entry name" value="RIBOSOMALL31"/>
</dbReference>
<dbReference type="SUPFAM" id="SSF143800">
    <property type="entry name" value="L28p-like"/>
    <property type="match status" value="1"/>
</dbReference>
<dbReference type="PROSITE" id="PS01143">
    <property type="entry name" value="RIBOSOMAL_L31"/>
    <property type="match status" value="1"/>
</dbReference>
<comment type="function">
    <text evidence="1">Binds the 23S rRNA.</text>
</comment>
<comment type="cofactor">
    <cofactor evidence="1">
        <name>Zn(2+)</name>
        <dbReference type="ChEBI" id="CHEBI:29105"/>
    </cofactor>
    <text evidence="1">Binds 1 zinc ion per subunit.</text>
</comment>
<comment type="subunit">
    <text evidence="1">Part of the 50S ribosomal subunit.</text>
</comment>
<comment type="similarity">
    <text evidence="1">Belongs to the bacterial ribosomal protein bL31 family. Type A subfamily.</text>
</comment>
<accession>Q21H76</accession>
<evidence type="ECO:0000255" key="1">
    <source>
        <dbReference type="HAMAP-Rule" id="MF_00501"/>
    </source>
</evidence>
<evidence type="ECO:0000305" key="2"/>
<organism>
    <name type="scientific">Saccharophagus degradans (strain 2-40 / ATCC 43961 / DSM 17024)</name>
    <dbReference type="NCBI Taxonomy" id="203122"/>
    <lineage>
        <taxon>Bacteria</taxon>
        <taxon>Pseudomonadati</taxon>
        <taxon>Pseudomonadota</taxon>
        <taxon>Gammaproteobacteria</taxon>
        <taxon>Cellvibrionales</taxon>
        <taxon>Cellvibrionaceae</taxon>
        <taxon>Saccharophagus</taxon>
    </lineage>
</organism>
<feature type="chain" id="PRO_0000259225" description="Large ribosomal subunit protein bL31">
    <location>
        <begin position="1"/>
        <end position="70"/>
    </location>
</feature>
<feature type="binding site" evidence="1">
    <location>
        <position position="16"/>
    </location>
    <ligand>
        <name>Zn(2+)</name>
        <dbReference type="ChEBI" id="CHEBI:29105"/>
    </ligand>
</feature>
<feature type="binding site" evidence="1">
    <location>
        <position position="18"/>
    </location>
    <ligand>
        <name>Zn(2+)</name>
        <dbReference type="ChEBI" id="CHEBI:29105"/>
    </ligand>
</feature>
<feature type="binding site" evidence="1">
    <location>
        <position position="37"/>
    </location>
    <ligand>
        <name>Zn(2+)</name>
        <dbReference type="ChEBI" id="CHEBI:29105"/>
    </ligand>
</feature>
<feature type="binding site" evidence="1">
    <location>
        <position position="40"/>
    </location>
    <ligand>
        <name>Zn(2+)</name>
        <dbReference type="ChEBI" id="CHEBI:29105"/>
    </ligand>
</feature>
<gene>
    <name evidence="1" type="primary">rpmE</name>
    <name type="ordered locus">Sde_2693</name>
</gene>
<sequence length="70" mass="7741">MQADIQPNYGDMNATCSCGNVVKTRSTLAKDIHIDVCSECHPFYTGKQKTADTGGRIDRFNKRFGAIKSK</sequence>
<protein>
    <recommendedName>
        <fullName evidence="1">Large ribosomal subunit protein bL31</fullName>
    </recommendedName>
    <alternativeName>
        <fullName evidence="2">50S ribosomal protein L31</fullName>
    </alternativeName>
</protein>
<name>RL31_SACD2</name>
<keyword id="KW-0479">Metal-binding</keyword>
<keyword id="KW-1185">Reference proteome</keyword>
<keyword id="KW-0687">Ribonucleoprotein</keyword>
<keyword id="KW-0689">Ribosomal protein</keyword>
<keyword id="KW-0694">RNA-binding</keyword>
<keyword id="KW-0699">rRNA-binding</keyword>
<keyword id="KW-0862">Zinc</keyword>